<reference key="1">
    <citation type="journal article" date="2009" name="BMC Genomics">
        <title>Conservation in the face of diversity: multistrain analysis of an intracellular bacterium.</title>
        <authorList>
            <person name="Dark M.J."/>
            <person name="Herndon D.R."/>
            <person name="Kappmeyer L.S."/>
            <person name="Gonzales M.P."/>
            <person name="Nordeen E."/>
            <person name="Palmer G.H."/>
            <person name="Knowles D.P. Jr."/>
            <person name="Brayton K.A."/>
        </authorList>
    </citation>
    <scope>NUCLEOTIDE SEQUENCE [LARGE SCALE GENOMIC DNA]</scope>
    <source>
        <strain>Florida</strain>
    </source>
</reference>
<dbReference type="EMBL" id="CP001079">
    <property type="protein sequence ID" value="ACM49503.1"/>
    <property type="molecule type" value="Genomic_DNA"/>
</dbReference>
<dbReference type="SMR" id="B9KJ41"/>
<dbReference type="STRING" id="320483.AMF_1048"/>
<dbReference type="KEGG" id="amf:AMF_1048"/>
<dbReference type="eggNOG" id="COG0230">
    <property type="taxonomic scope" value="Bacteria"/>
</dbReference>
<dbReference type="HOGENOM" id="CLU_129938_2_0_5"/>
<dbReference type="Proteomes" id="UP000007307">
    <property type="component" value="Chromosome"/>
</dbReference>
<dbReference type="GO" id="GO:1990904">
    <property type="term" value="C:ribonucleoprotein complex"/>
    <property type="evidence" value="ECO:0007669"/>
    <property type="project" value="UniProtKB-KW"/>
</dbReference>
<dbReference type="GO" id="GO:0005840">
    <property type="term" value="C:ribosome"/>
    <property type="evidence" value="ECO:0007669"/>
    <property type="project" value="UniProtKB-KW"/>
</dbReference>
<dbReference type="GO" id="GO:0003735">
    <property type="term" value="F:structural constituent of ribosome"/>
    <property type="evidence" value="ECO:0007669"/>
    <property type="project" value="InterPro"/>
</dbReference>
<dbReference type="GO" id="GO:0006412">
    <property type="term" value="P:translation"/>
    <property type="evidence" value="ECO:0007669"/>
    <property type="project" value="UniProtKB-UniRule"/>
</dbReference>
<dbReference type="FunFam" id="1.10.287.3980:FF:000001">
    <property type="entry name" value="Mitochondrial ribosomal protein L34"/>
    <property type="match status" value="1"/>
</dbReference>
<dbReference type="Gene3D" id="1.10.287.3980">
    <property type="match status" value="1"/>
</dbReference>
<dbReference type="HAMAP" id="MF_00391">
    <property type="entry name" value="Ribosomal_bL34"/>
    <property type="match status" value="1"/>
</dbReference>
<dbReference type="InterPro" id="IPR000271">
    <property type="entry name" value="Ribosomal_bL34"/>
</dbReference>
<dbReference type="InterPro" id="IPR020939">
    <property type="entry name" value="Ribosomal_bL34_CS"/>
</dbReference>
<dbReference type="NCBIfam" id="TIGR01030">
    <property type="entry name" value="rpmH_bact"/>
    <property type="match status" value="1"/>
</dbReference>
<dbReference type="PANTHER" id="PTHR14503:SF4">
    <property type="entry name" value="LARGE RIBOSOMAL SUBUNIT PROTEIN BL34M"/>
    <property type="match status" value="1"/>
</dbReference>
<dbReference type="PANTHER" id="PTHR14503">
    <property type="entry name" value="MITOCHONDRIAL RIBOSOMAL PROTEIN 34 FAMILY MEMBER"/>
    <property type="match status" value="1"/>
</dbReference>
<dbReference type="Pfam" id="PF00468">
    <property type="entry name" value="Ribosomal_L34"/>
    <property type="match status" value="1"/>
</dbReference>
<dbReference type="PROSITE" id="PS00784">
    <property type="entry name" value="RIBOSOMAL_L34"/>
    <property type="match status" value="1"/>
</dbReference>
<feature type="chain" id="PRO_1000196006" description="Large ribosomal subunit protein bL34">
    <location>
        <begin position="1"/>
        <end position="44"/>
    </location>
</feature>
<comment type="similarity">
    <text evidence="1">Belongs to the bacterial ribosomal protein bL34 family.</text>
</comment>
<gene>
    <name evidence="1" type="primary">rpmH</name>
    <name type="ordered locus">AMF_1048</name>
</gene>
<sequence length="44" mass="5413">MKRTFQPSRIVRKRRHGFRARMSTRWGRKILNRRRAKGRCLLCA</sequence>
<proteinExistence type="inferred from homology"/>
<name>RL34_ANAMF</name>
<protein>
    <recommendedName>
        <fullName evidence="1">Large ribosomal subunit protein bL34</fullName>
    </recommendedName>
    <alternativeName>
        <fullName evidence="2">50S ribosomal protein L34</fullName>
    </alternativeName>
</protein>
<organism>
    <name type="scientific">Anaplasma marginale (strain Florida)</name>
    <dbReference type="NCBI Taxonomy" id="320483"/>
    <lineage>
        <taxon>Bacteria</taxon>
        <taxon>Pseudomonadati</taxon>
        <taxon>Pseudomonadota</taxon>
        <taxon>Alphaproteobacteria</taxon>
        <taxon>Rickettsiales</taxon>
        <taxon>Anaplasmataceae</taxon>
        <taxon>Anaplasma</taxon>
    </lineage>
</organism>
<accession>B9KJ41</accession>
<evidence type="ECO:0000255" key="1">
    <source>
        <dbReference type="HAMAP-Rule" id="MF_00391"/>
    </source>
</evidence>
<evidence type="ECO:0000305" key="2"/>
<keyword id="KW-1185">Reference proteome</keyword>
<keyword id="KW-0687">Ribonucleoprotein</keyword>
<keyword id="KW-0689">Ribosomal protein</keyword>